<sequence>MKRVLTALAAALPFAAHAADAISGAVERQPTNWQAIIMFLIFVVFTLGITYWASKRVRSRSDYYTAGGNITGFQNGLAIAGDYMSAASFLGISALVFTSGYDGLIYSLGFLVGWPIILFLIAERLRNLGRYTFADVASYRLKQGPIRILSACGSLVVVALYLIAQMVGAGKLIELLFGLNYHIAVVLVGVLMMMYVLFGGMLATTWVQIIKAVLLLFGASFMAFMVMKHVGFSFNNLFTEAMAVHPKGTAIMSPGGLVQDPISALSLGLGLMFGTAGLPHILMRFFTVSDAREARKSVFYATGFMGYFYILTFIIGFGAIMLVGANPAYKDAAGALIGGNNMAAVHLANAVGGNLFLGFISAVAFATILAVVAGLTLAGASAVSHDLYANVFRKGATEREELKVSKITVLVLGVIAIILGVLFENQNIAFMVGLAFAIAASCNFPIILLSMYWSKLTTRGAMLGGWLGLLTAVVLMILGPTIWVQILGHEKAIFPYEYPALFSISVAFLGIWFFSATDNSAEGNREREQFRAQFIRSQTGFGVEQGRAH</sequence>
<dbReference type="EMBL" id="CP000880">
    <property type="protein sequence ID" value="ABX23232.1"/>
    <property type="molecule type" value="Genomic_DNA"/>
</dbReference>
<dbReference type="SMR" id="A9MGK8"/>
<dbReference type="STRING" id="41514.SARI_03402"/>
<dbReference type="KEGG" id="ses:SARI_03402"/>
<dbReference type="HOGENOM" id="CLU_018808_8_3_6"/>
<dbReference type="Proteomes" id="UP000002084">
    <property type="component" value="Chromosome"/>
</dbReference>
<dbReference type="GO" id="GO:0005886">
    <property type="term" value="C:plasma membrane"/>
    <property type="evidence" value="ECO:0007669"/>
    <property type="project" value="UniProtKB-SubCell"/>
</dbReference>
<dbReference type="GO" id="GO:0015123">
    <property type="term" value="F:acetate transmembrane transporter activity"/>
    <property type="evidence" value="ECO:0007669"/>
    <property type="project" value="UniProtKB-UniRule"/>
</dbReference>
<dbReference type="GO" id="GO:0043879">
    <property type="term" value="F:glycolate transmembrane transporter activity"/>
    <property type="evidence" value="ECO:0007669"/>
    <property type="project" value="InterPro"/>
</dbReference>
<dbReference type="GO" id="GO:0015293">
    <property type="term" value="F:symporter activity"/>
    <property type="evidence" value="ECO:0007669"/>
    <property type="project" value="UniProtKB-KW"/>
</dbReference>
<dbReference type="GO" id="GO:0006847">
    <property type="term" value="P:plasma membrane acetate transport"/>
    <property type="evidence" value="ECO:0007669"/>
    <property type="project" value="TreeGrafter"/>
</dbReference>
<dbReference type="GO" id="GO:0006814">
    <property type="term" value="P:sodium ion transport"/>
    <property type="evidence" value="ECO:0007669"/>
    <property type="project" value="UniProtKB-KW"/>
</dbReference>
<dbReference type="CDD" id="cd11480">
    <property type="entry name" value="SLC5sbd_u4"/>
    <property type="match status" value="1"/>
</dbReference>
<dbReference type="FunFam" id="1.20.1730.10:FF:000001">
    <property type="entry name" value="Cation/acetate symporter ActP"/>
    <property type="match status" value="1"/>
</dbReference>
<dbReference type="Gene3D" id="1.20.1730.10">
    <property type="entry name" value="Sodium/glucose cotransporter"/>
    <property type="match status" value="1"/>
</dbReference>
<dbReference type="HAMAP" id="MF_01426">
    <property type="entry name" value="Acet_symport_ActP"/>
    <property type="match status" value="1"/>
</dbReference>
<dbReference type="InterPro" id="IPR014083">
    <property type="entry name" value="Cation/Ac_symporter_ActP"/>
</dbReference>
<dbReference type="InterPro" id="IPR038377">
    <property type="entry name" value="Na/Glc_symporter_sf"/>
</dbReference>
<dbReference type="InterPro" id="IPR001734">
    <property type="entry name" value="Na/solute_symporter"/>
</dbReference>
<dbReference type="InterPro" id="IPR018212">
    <property type="entry name" value="Na/solute_symporter_CS"/>
</dbReference>
<dbReference type="InterPro" id="IPR050277">
    <property type="entry name" value="Sodium:Solute_Symporter"/>
</dbReference>
<dbReference type="NCBIfam" id="NF006903">
    <property type="entry name" value="PRK09395.1"/>
    <property type="match status" value="1"/>
</dbReference>
<dbReference type="NCBIfam" id="NF009135">
    <property type="entry name" value="PRK12488.1"/>
    <property type="match status" value="1"/>
</dbReference>
<dbReference type="NCBIfam" id="TIGR00813">
    <property type="entry name" value="sss"/>
    <property type="match status" value="1"/>
</dbReference>
<dbReference type="NCBIfam" id="TIGR02711">
    <property type="entry name" value="symport_actP"/>
    <property type="match status" value="1"/>
</dbReference>
<dbReference type="PANTHER" id="PTHR48086:SF6">
    <property type="entry name" value="CATION_ACETATE SYMPORTER ACTP"/>
    <property type="match status" value="1"/>
</dbReference>
<dbReference type="PANTHER" id="PTHR48086">
    <property type="entry name" value="SODIUM/PROLINE SYMPORTER-RELATED"/>
    <property type="match status" value="1"/>
</dbReference>
<dbReference type="Pfam" id="PF00474">
    <property type="entry name" value="SSF"/>
    <property type="match status" value="1"/>
</dbReference>
<dbReference type="PROSITE" id="PS00456">
    <property type="entry name" value="NA_SOLUT_SYMP_1"/>
    <property type="match status" value="1"/>
</dbReference>
<dbReference type="PROSITE" id="PS00457">
    <property type="entry name" value="NA_SOLUT_SYMP_2"/>
    <property type="match status" value="1"/>
</dbReference>
<dbReference type="PROSITE" id="PS50283">
    <property type="entry name" value="NA_SOLUT_SYMP_3"/>
    <property type="match status" value="1"/>
</dbReference>
<name>ACTP_SALAR</name>
<reference key="1">
    <citation type="submission" date="2007-11" db="EMBL/GenBank/DDBJ databases">
        <authorList>
            <consortium name="The Salmonella enterica serovar Arizonae Genome Sequencing Project"/>
            <person name="McClelland M."/>
            <person name="Sanderson E.K."/>
            <person name="Porwollik S."/>
            <person name="Spieth J."/>
            <person name="Clifton W.S."/>
            <person name="Fulton R."/>
            <person name="Chunyan W."/>
            <person name="Wollam A."/>
            <person name="Shah N."/>
            <person name="Pepin K."/>
            <person name="Bhonagiri V."/>
            <person name="Nash W."/>
            <person name="Johnson M."/>
            <person name="Thiruvilangam P."/>
            <person name="Wilson R."/>
        </authorList>
    </citation>
    <scope>NUCLEOTIDE SEQUENCE [LARGE SCALE GENOMIC DNA]</scope>
    <source>
        <strain>ATCC BAA-731 / CDC346-86 / RSK2980</strain>
    </source>
</reference>
<protein>
    <recommendedName>
        <fullName evidence="1">Cation/acetate symporter ActP</fullName>
    </recommendedName>
    <alternativeName>
        <fullName evidence="1">Acetate permease</fullName>
    </alternativeName>
    <alternativeName>
        <fullName evidence="1">Acetate transporter ActP</fullName>
    </alternativeName>
</protein>
<organism>
    <name type="scientific">Salmonella arizonae (strain ATCC BAA-731 / CDC346-86 / RSK2980)</name>
    <dbReference type="NCBI Taxonomy" id="41514"/>
    <lineage>
        <taxon>Bacteria</taxon>
        <taxon>Pseudomonadati</taxon>
        <taxon>Pseudomonadota</taxon>
        <taxon>Gammaproteobacteria</taxon>
        <taxon>Enterobacterales</taxon>
        <taxon>Enterobacteriaceae</taxon>
        <taxon>Salmonella</taxon>
    </lineage>
</organism>
<keyword id="KW-0997">Cell inner membrane</keyword>
<keyword id="KW-1003">Cell membrane</keyword>
<keyword id="KW-0406">Ion transport</keyword>
<keyword id="KW-0472">Membrane</keyword>
<keyword id="KW-1185">Reference proteome</keyword>
<keyword id="KW-0915">Sodium</keyword>
<keyword id="KW-0739">Sodium transport</keyword>
<keyword id="KW-0769">Symport</keyword>
<keyword id="KW-0812">Transmembrane</keyword>
<keyword id="KW-1133">Transmembrane helix</keyword>
<keyword id="KW-0813">Transport</keyword>
<feature type="chain" id="PRO_1000087425" description="Cation/acetate symporter ActP">
    <location>
        <begin position="1"/>
        <end position="549"/>
    </location>
</feature>
<feature type="transmembrane region" description="Helical" evidence="1">
    <location>
        <begin position="33"/>
        <end position="53"/>
    </location>
</feature>
<feature type="transmembrane region" description="Helical" evidence="1">
    <location>
        <begin position="77"/>
        <end position="97"/>
    </location>
</feature>
<feature type="transmembrane region" description="Helical" evidence="1">
    <location>
        <begin position="103"/>
        <end position="123"/>
    </location>
</feature>
<feature type="transmembrane region" description="Helical" evidence="1">
    <location>
        <begin position="148"/>
        <end position="168"/>
    </location>
</feature>
<feature type="transmembrane region" description="Helical" evidence="1">
    <location>
        <begin position="183"/>
        <end position="203"/>
    </location>
</feature>
<feature type="transmembrane region" description="Helical" evidence="1">
    <location>
        <begin position="206"/>
        <end position="226"/>
    </location>
</feature>
<feature type="transmembrane region" description="Helical" evidence="1">
    <location>
        <begin position="262"/>
        <end position="282"/>
    </location>
</feature>
<feature type="transmembrane region" description="Helical" evidence="1">
    <location>
        <begin position="303"/>
        <end position="323"/>
    </location>
</feature>
<feature type="transmembrane region" description="Helical" evidence="1">
    <location>
        <begin position="355"/>
        <end position="375"/>
    </location>
</feature>
<feature type="transmembrane region" description="Helical" evidence="1">
    <location>
        <begin position="404"/>
        <end position="424"/>
    </location>
</feature>
<feature type="transmembrane region" description="Helical" evidence="1">
    <location>
        <begin position="428"/>
        <end position="448"/>
    </location>
</feature>
<feature type="transmembrane region" description="Helical" evidence="1">
    <location>
        <begin position="464"/>
        <end position="484"/>
    </location>
</feature>
<feature type="transmembrane region" description="Helical" evidence="1">
    <location>
        <begin position="493"/>
        <end position="513"/>
    </location>
</feature>
<accession>A9MGK8</accession>
<evidence type="ECO:0000255" key="1">
    <source>
        <dbReference type="HAMAP-Rule" id="MF_01426"/>
    </source>
</evidence>
<proteinExistence type="inferred from homology"/>
<comment type="function">
    <text evidence="1">Transports acetate.</text>
</comment>
<comment type="subcellular location">
    <subcellularLocation>
        <location evidence="1">Cell inner membrane</location>
        <topology evidence="1">Multi-pass membrane protein</topology>
    </subcellularLocation>
</comment>
<comment type="similarity">
    <text evidence="1">Belongs to the sodium:solute symporter (SSF) (TC 2.A.21) family.</text>
</comment>
<gene>
    <name evidence="1" type="primary">actP</name>
    <name type="ordered locus">SARI_03402</name>
</gene>